<proteinExistence type="evidence at protein level"/>
<dbReference type="EC" id="3.2.1.4"/>
<dbReference type="EMBL" id="AC016163">
    <property type="protein sequence ID" value="AAG51817.1"/>
    <property type="molecule type" value="Genomic_DNA"/>
</dbReference>
<dbReference type="EMBL" id="CP002684">
    <property type="protein sequence ID" value="AEE35195.1"/>
    <property type="molecule type" value="Genomic_DNA"/>
</dbReference>
<dbReference type="EMBL" id="AY086043">
    <property type="protein sequence ID" value="AAM63253.1"/>
    <property type="molecule type" value="mRNA"/>
</dbReference>
<dbReference type="EMBL" id="U17888">
    <property type="protein sequence ID" value="AAA90944.1"/>
    <property type="status" value="ALT_FRAME"/>
    <property type="molecule type" value="mRNA"/>
</dbReference>
<dbReference type="PIR" id="S61430">
    <property type="entry name" value="S61430"/>
</dbReference>
<dbReference type="RefSeq" id="NP_177294.1">
    <property type="nucleotide sequence ID" value="NM_105807.2"/>
</dbReference>
<dbReference type="SMR" id="Q9C9H5"/>
<dbReference type="BioGRID" id="28699">
    <property type="interactions" value="8"/>
</dbReference>
<dbReference type="FunCoup" id="Q9C9H5">
    <property type="interactions" value="326"/>
</dbReference>
<dbReference type="IntAct" id="Q9C9H5">
    <property type="interactions" value="17"/>
</dbReference>
<dbReference type="STRING" id="3702.Q9C9H5"/>
<dbReference type="CAZy" id="GH9">
    <property type="family name" value="Glycoside Hydrolase Family 9"/>
</dbReference>
<dbReference type="GlyGen" id="Q9C9H5">
    <property type="glycosylation" value="1 site"/>
</dbReference>
<dbReference type="PaxDb" id="3702-AT1G71380.1"/>
<dbReference type="ProteomicsDB" id="247320"/>
<dbReference type="EnsemblPlants" id="AT1G71380.1">
    <property type="protein sequence ID" value="AT1G71380.1"/>
    <property type="gene ID" value="AT1G71380"/>
</dbReference>
<dbReference type="GeneID" id="843479"/>
<dbReference type="Gramene" id="AT1G71380.1">
    <property type="protein sequence ID" value="AT1G71380.1"/>
    <property type="gene ID" value="AT1G71380"/>
</dbReference>
<dbReference type="KEGG" id="ath:AT1G71380"/>
<dbReference type="Araport" id="AT1G71380"/>
<dbReference type="TAIR" id="AT1G71380">
    <property type="gene designation" value="CEL3"/>
</dbReference>
<dbReference type="eggNOG" id="ENOG502QRXS">
    <property type="taxonomic scope" value="Eukaryota"/>
</dbReference>
<dbReference type="HOGENOM" id="CLU_008926_1_2_1"/>
<dbReference type="InParanoid" id="Q9C9H5"/>
<dbReference type="OMA" id="GGFQPFF"/>
<dbReference type="PhylomeDB" id="Q9C9H5"/>
<dbReference type="BioCyc" id="ARA:AT1G71380-MONOMER"/>
<dbReference type="BRENDA" id="3.2.1.4">
    <property type="organism ID" value="399"/>
</dbReference>
<dbReference type="CD-CODE" id="4299E36E">
    <property type="entry name" value="Nucleolus"/>
</dbReference>
<dbReference type="PRO" id="PR:Q9C9H5"/>
<dbReference type="Proteomes" id="UP000006548">
    <property type="component" value="Chromosome 1"/>
</dbReference>
<dbReference type="ExpressionAtlas" id="Q9C9H5">
    <property type="expression patterns" value="baseline and differential"/>
</dbReference>
<dbReference type="GO" id="GO:0005576">
    <property type="term" value="C:extracellular region"/>
    <property type="evidence" value="ECO:0007669"/>
    <property type="project" value="UniProtKB-KW"/>
</dbReference>
<dbReference type="GO" id="GO:0005794">
    <property type="term" value="C:Golgi apparatus"/>
    <property type="evidence" value="ECO:0007005"/>
    <property type="project" value="TAIR"/>
</dbReference>
<dbReference type="GO" id="GO:0009505">
    <property type="term" value="C:plant-type cell wall"/>
    <property type="evidence" value="ECO:0000314"/>
    <property type="project" value="UniProtKB"/>
</dbReference>
<dbReference type="GO" id="GO:0009506">
    <property type="term" value="C:plasmodesma"/>
    <property type="evidence" value="ECO:0007005"/>
    <property type="project" value="TAIR"/>
</dbReference>
<dbReference type="GO" id="GO:0008810">
    <property type="term" value="F:cellulase activity"/>
    <property type="evidence" value="ECO:0007669"/>
    <property type="project" value="UniProtKB-EC"/>
</dbReference>
<dbReference type="GO" id="GO:0071555">
    <property type="term" value="P:cell wall organization"/>
    <property type="evidence" value="ECO:0007669"/>
    <property type="project" value="UniProtKB-KW"/>
</dbReference>
<dbReference type="GO" id="GO:0030245">
    <property type="term" value="P:cellulose catabolic process"/>
    <property type="evidence" value="ECO:0007669"/>
    <property type="project" value="UniProtKB-KW"/>
</dbReference>
<dbReference type="FunFam" id="1.50.10.10:FF:000020">
    <property type="entry name" value="Endoglucanase"/>
    <property type="match status" value="1"/>
</dbReference>
<dbReference type="Gene3D" id="1.50.10.10">
    <property type="match status" value="1"/>
</dbReference>
<dbReference type="InterPro" id="IPR008928">
    <property type="entry name" value="6-hairpin_glycosidase_sf"/>
</dbReference>
<dbReference type="InterPro" id="IPR012341">
    <property type="entry name" value="6hp_glycosidase-like_sf"/>
</dbReference>
<dbReference type="InterPro" id="IPR001701">
    <property type="entry name" value="Glyco_hydro_9"/>
</dbReference>
<dbReference type="InterPro" id="IPR033126">
    <property type="entry name" value="Glyco_hydro_9_Asp/Glu_AS"/>
</dbReference>
<dbReference type="InterPro" id="IPR018221">
    <property type="entry name" value="Glyco_hydro_9_His_AS"/>
</dbReference>
<dbReference type="PANTHER" id="PTHR22298">
    <property type="entry name" value="ENDO-1,4-BETA-GLUCANASE"/>
    <property type="match status" value="1"/>
</dbReference>
<dbReference type="Pfam" id="PF00759">
    <property type="entry name" value="Glyco_hydro_9"/>
    <property type="match status" value="1"/>
</dbReference>
<dbReference type="SUPFAM" id="SSF48208">
    <property type="entry name" value="Six-hairpin glycosidases"/>
    <property type="match status" value="1"/>
</dbReference>
<dbReference type="PROSITE" id="PS60032">
    <property type="entry name" value="GH9_1"/>
    <property type="match status" value="1"/>
</dbReference>
<dbReference type="PROSITE" id="PS00592">
    <property type="entry name" value="GH9_2"/>
    <property type="match status" value="1"/>
</dbReference>
<dbReference type="PROSITE" id="PS00698">
    <property type="entry name" value="GH9_3"/>
    <property type="match status" value="1"/>
</dbReference>
<gene>
    <name type="primary">CEL3</name>
    <name type="ordered locus">At1g71380</name>
    <name type="ORF">F26A9.24</name>
</gene>
<name>GUN9_ARATH</name>
<keyword id="KW-0119">Carbohydrate metabolism</keyword>
<keyword id="KW-0134">Cell wall</keyword>
<keyword id="KW-0961">Cell wall biogenesis/degradation</keyword>
<keyword id="KW-0136">Cellulose degradation</keyword>
<keyword id="KW-0903">Direct protein sequencing</keyword>
<keyword id="KW-0326">Glycosidase</keyword>
<keyword id="KW-0378">Hydrolase</keyword>
<keyword id="KW-0624">Polysaccharide degradation</keyword>
<keyword id="KW-1185">Reference proteome</keyword>
<keyword id="KW-0964">Secreted</keyword>
<keyword id="KW-0732">Signal</keyword>
<feature type="signal peptide" evidence="5">
    <location>
        <begin position="1"/>
        <end position="21"/>
    </location>
</feature>
<feature type="chain" id="PRO_0000043221" description="Endoglucanase 9">
    <location>
        <begin position="22"/>
        <end position="484"/>
    </location>
</feature>
<feature type="active site" description="Nucleophile" evidence="3">
    <location>
        <position position="77"/>
    </location>
</feature>
<feature type="active site" evidence="1">
    <location>
        <position position="402"/>
    </location>
</feature>
<feature type="active site" evidence="2">
    <location>
        <position position="453"/>
    </location>
</feature>
<feature type="active site" evidence="2">
    <location>
        <position position="462"/>
    </location>
</feature>
<feature type="sequence conflict" description="In Ref. 4; AAA90944." evidence="6" ref="4">
    <original>G</original>
    <variation>A</variation>
    <location>
        <position position="135"/>
    </location>
</feature>
<feature type="sequence conflict" description="In Ref. 4; AAA90944." evidence="6" ref="4">
    <original>E</original>
    <variation>K</variation>
    <location>
        <position position="173"/>
    </location>
</feature>
<feature type="sequence conflict" description="In Ref. 3; AAM63253." evidence="6" ref="3">
    <original>D</original>
    <variation>N</variation>
    <location>
        <position position="189"/>
    </location>
</feature>
<evidence type="ECO:0000255" key="1">
    <source>
        <dbReference type="PROSITE-ProRule" id="PRU10059"/>
    </source>
</evidence>
<evidence type="ECO:0000255" key="2">
    <source>
        <dbReference type="PROSITE-ProRule" id="PRU10060"/>
    </source>
</evidence>
<evidence type="ECO:0000255" key="3">
    <source>
        <dbReference type="PROSITE-ProRule" id="PRU10140"/>
    </source>
</evidence>
<evidence type="ECO:0000269" key="4">
    <source>
    </source>
</evidence>
<evidence type="ECO:0000269" key="5">
    <source>
    </source>
</evidence>
<evidence type="ECO:0000305" key="6"/>
<evidence type="ECO:0000312" key="7">
    <source>
        <dbReference type="EMBL" id="AAG51817.1"/>
    </source>
</evidence>
<evidence type="ECO:0000312" key="8">
    <source>
        <dbReference type="EMBL" id="AAM63253.1"/>
    </source>
</evidence>
<sequence>MTSLFFFVLLFSSLLISNGDANPNYKEALSKSLLFFQGQRSGPLPRGQQISWRASSGLSDGSAAHVDLTGGYYDAGDNVKFNLPMAFTTTMLSWSALEYGKRMGPELENARVNIRWATDYLLKCARATPGKLYVGVGDPNVDHKCWERPEDMDTPRTVYSVSASNPGSDVAAETAAALAAASMVFRKVDSKYSRLLLATAKDVMQFAIQYQGAYSDSLSSSVCPFYCSYSGYKDELMWGASWLLRATNNPYYANFIKSLGGGDQPDIFSWDNKYAGAYVLLSRRALLNKDSNFEQYKQAAENFICKILPDSPSSSTQYTQGGLMYKLPQSNLQYVTSITFLLTTYAKYMKATKHTFNCGSSVIVPNALISLSKRQVDYILGDNPIKMSYMVGFSSNFPKRIHHRASSLPSHALRSQSLGCNGGFQSFYTQNPNPNILTGAIVGGPNQNDGYPDQRDDYSHAEPATYINAAFVGPLAYFAAGRST</sequence>
<accession>Q9C9H5</accession>
<accession>P80855</accession>
<accession>Q38817</accession>
<accession>Q8LDE8</accession>
<reference evidence="7" key="1">
    <citation type="journal article" date="2000" name="Nature">
        <title>Sequence and analysis of chromosome 1 of the plant Arabidopsis thaliana.</title>
        <authorList>
            <person name="Theologis A."/>
            <person name="Ecker J.R."/>
            <person name="Palm C.J."/>
            <person name="Federspiel N.A."/>
            <person name="Kaul S."/>
            <person name="White O."/>
            <person name="Alonso J."/>
            <person name="Altafi H."/>
            <person name="Araujo R."/>
            <person name="Bowman C.L."/>
            <person name="Brooks S.Y."/>
            <person name="Buehler E."/>
            <person name="Chan A."/>
            <person name="Chao Q."/>
            <person name="Chen H."/>
            <person name="Cheuk R.F."/>
            <person name="Chin C.W."/>
            <person name="Chung M.K."/>
            <person name="Conn L."/>
            <person name="Conway A.B."/>
            <person name="Conway A.R."/>
            <person name="Creasy T.H."/>
            <person name="Dewar K."/>
            <person name="Dunn P."/>
            <person name="Etgu P."/>
            <person name="Feldblyum T.V."/>
            <person name="Feng J.-D."/>
            <person name="Fong B."/>
            <person name="Fujii C.Y."/>
            <person name="Gill J.E."/>
            <person name="Goldsmith A.D."/>
            <person name="Haas B."/>
            <person name="Hansen N.F."/>
            <person name="Hughes B."/>
            <person name="Huizar L."/>
            <person name="Hunter J.L."/>
            <person name="Jenkins J."/>
            <person name="Johnson-Hopson C."/>
            <person name="Khan S."/>
            <person name="Khaykin E."/>
            <person name="Kim C.J."/>
            <person name="Koo H.L."/>
            <person name="Kremenetskaia I."/>
            <person name="Kurtz D.B."/>
            <person name="Kwan A."/>
            <person name="Lam B."/>
            <person name="Langin-Hooper S."/>
            <person name="Lee A."/>
            <person name="Lee J.M."/>
            <person name="Lenz C.A."/>
            <person name="Li J.H."/>
            <person name="Li Y.-P."/>
            <person name="Lin X."/>
            <person name="Liu S.X."/>
            <person name="Liu Z.A."/>
            <person name="Luros J.S."/>
            <person name="Maiti R."/>
            <person name="Marziali A."/>
            <person name="Militscher J."/>
            <person name="Miranda M."/>
            <person name="Nguyen M."/>
            <person name="Nierman W.C."/>
            <person name="Osborne B.I."/>
            <person name="Pai G."/>
            <person name="Peterson J."/>
            <person name="Pham P.K."/>
            <person name="Rizzo M."/>
            <person name="Rooney T."/>
            <person name="Rowley D."/>
            <person name="Sakano H."/>
            <person name="Salzberg S.L."/>
            <person name="Schwartz J.R."/>
            <person name="Shinn P."/>
            <person name="Southwick A.M."/>
            <person name="Sun H."/>
            <person name="Tallon L.J."/>
            <person name="Tambunga G."/>
            <person name="Toriumi M.J."/>
            <person name="Town C.D."/>
            <person name="Utterback T."/>
            <person name="Van Aken S."/>
            <person name="Vaysberg M."/>
            <person name="Vysotskaia V.S."/>
            <person name="Walker M."/>
            <person name="Wu D."/>
            <person name="Yu G."/>
            <person name="Fraser C.M."/>
            <person name="Venter J.C."/>
            <person name="Davis R.W."/>
        </authorList>
    </citation>
    <scope>NUCLEOTIDE SEQUENCE [LARGE SCALE GENOMIC DNA]</scope>
    <source>
        <strain evidence="7">cv. Columbia</strain>
    </source>
</reference>
<reference evidence="8" key="2">
    <citation type="journal article" date="2017" name="Plant J.">
        <title>Araport11: a complete reannotation of the Arabidopsis thaliana reference genome.</title>
        <authorList>
            <person name="Cheng C.Y."/>
            <person name="Krishnakumar V."/>
            <person name="Chan A.P."/>
            <person name="Thibaud-Nissen F."/>
            <person name="Schobel S."/>
            <person name="Town C.D."/>
        </authorList>
    </citation>
    <scope>GENOME REANNOTATION</scope>
    <source>
        <strain>cv. Columbia</strain>
    </source>
</reference>
<reference evidence="8" key="3">
    <citation type="submission" date="2002-03" db="EMBL/GenBank/DDBJ databases">
        <title>Full-length cDNA from Arabidopsis thaliana.</title>
        <authorList>
            <person name="Brover V.V."/>
            <person name="Troukhan M.E."/>
            <person name="Alexandrov N.A."/>
            <person name="Lu Y.-P."/>
            <person name="Flavell R.B."/>
            <person name="Feldmann K.A."/>
        </authorList>
    </citation>
    <scope>NUCLEOTIDE SEQUENCE [LARGE SCALE MRNA]</scope>
</reference>
<reference key="4">
    <citation type="journal article" date="1995" name="Plant Mol. Biol.">
        <title>An Arabidopsis cDNA encoding beta-glucanase.</title>
        <authorList>
            <person name="Lu G."/>
            <person name="Ferl R.J."/>
        </authorList>
    </citation>
    <scope>NUCLEOTIDE SEQUENCE [MRNA] OF 5-484</scope>
    <source>
        <strain>cv. Columbia</strain>
    </source>
</reference>
<reference evidence="6" key="5">
    <citation type="journal article" date="1997" name="J. Biol. Chem.">
        <title>Differential extraction and protein sequencing reveals major differences in patterns of primary cell wall proteins from plants.</title>
        <authorList>
            <person name="Robertson D."/>
            <person name="Mitchell G.P."/>
            <person name="Gilroy J.S."/>
            <person name="Gerrish C."/>
            <person name="Bolwell G.P."/>
            <person name="Slabas A.R."/>
        </authorList>
    </citation>
    <scope>PROTEIN SEQUENCE OF 22-40</scope>
    <scope>SUBCELLULAR LOCATION</scope>
    <source>
        <strain>cv. Landsberg erecta</strain>
    </source>
</reference>
<reference key="6">
    <citation type="journal article" date="2004" name="J. Mol. Evol.">
        <title>Phylogenetic analysis of the plant endo-beta-1,4-glucanase gene family.</title>
        <authorList>
            <person name="Libertini E."/>
            <person name="Li Y."/>
            <person name="McQueen-Mason S.J."/>
        </authorList>
    </citation>
    <scope>GENE FAMILY</scope>
</reference>
<reference key="7">
    <citation type="journal article" date="2004" name="Plant Mol. Biol.">
        <title>Root cap specific expression of an endo-beta-1,4-D-glucanase (cellulase): a new marker to study root development in Arabidopsis.</title>
        <authorList>
            <person name="del Campillo E."/>
            <person name="Abdel-Aziz A."/>
            <person name="Crawford D."/>
            <person name="Patterson S.E."/>
        </authorList>
    </citation>
    <scope>TISSUE SPECIFICITY</scope>
</reference>
<protein>
    <recommendedName>
        <fullName>Endoglucanase 9</fullName>
        <ecNumber>3.2.1.4</ecNumber>
    </recommendedName>
    <alternativeName>
        <fullName>Cellulase 3</fullName>
        <shortName>AtCEL3</shortName>
    </alternativeName>
    <alternativeName>
        <fullName>Endo-1,4-beta glucanase 9</fullName>
    </alternativeName>
</protein>
<comment type="catalytic activity">
    <reaction>
        <text>Endohydrolysis of (1-&gt;4)-beta-D-glucosidic linkages in cellulose, lichenin and cereal beta-D-glucans.</text>
        <dbReference type="EC" id="3.2.1.4"/>
    </reaction>
</comment>
<comment type="subcellular location">
    <subcellularLocation>
        <location evidence="5">Secreted</location>
        <location evidence="5">Cell wall</location>
    </subcellularLocation>
</comment>
<comment type="tissue specificity">
    <text evidence="4">Specifically expressed in root cap cells.</text>
</comment>
<comment type="similarity">
    <text evidence="3">Belongs to the glycosyl hydrolase 9 (cellulase E) family.</text>
</comment>
<comment type="sequence caution" evidence="6">
    <conflict type="frameshift">
        <sequence resource="EMBL-CDS" id="AAA90944"/>
    </conflict>
</comment>
<organism>
    <name type="scientific">Arabidopsis thaliana</name>
    <name type="common">Mouse-ear cress</name>
    <dbReference type="NCBI Taxonomy" id="3702"/>
    <lineage>
        <taxon>Eukaryota</taxon>
        <taxon>Viridiplantae</taxon>
        <taxon>Streptophyta</taxon>
        <taxon>Embryophyta</taxon>
        <taxon>Tracheophyta</taxon>
        <taxon>Spermatophyta</taxon>
        <taxon>Magnoliopsida</taxon>
        <taxon>eudicotyledons</taxon>
        <taxon>Gunneridae</taxon>
        <taxon>Pentapetalae</taxon>
        <taxon>rosids</taxon>
        <taxon>malvids</taxon>
        <taxon>Brassicales</taxon>
        <taxon>Brassicaceae</taxon>
        <taxon>Camelineae</taxon>
        <taxon>Arabidopsis</taxon>
    </lineage>
</organism>